<protein>
    <recommendedName>
        <fullName>High osmolarity signaling protein sho1</fullName>
    </recommendedName>
    <alternativeName>
        <fullName>Osmosensor sho1</fullName>
    </alternativeName>
</protein>
<proteinExistence type="inferred from homology"/>
<keyword id="KW-1003">Cell membrane</keyword>
<keyword id="KW-0472">Membrane</keyword>
<keyword id="KW-1185">Reference proteome</keyword>
<keyword id="KW-0728">SH3 domain</keyword>
<keyword id="KW-0346">Stress response</keyword>
<keyword id="KW-0812">Transmembrane</keyword>
<keyword id="KW-1133">Transmembrane helix</keyword>
<sequence length="322" mass="35254">MQSYGGSVNYPPSFNNPKMEHGRNSYRRKGIDMGNIIGDPFALATTSIATLSWIIILFGSIFGFRDQNDGSNGAPVIVWPTYSWFTLVFNFFLILGIFIVIASDSAQTYHVAIVGYLAVGLVGSTSSINNLIYSGVASMEATAAGYILLSMVTIIWIFYFGSAPSAVPRAYIDSFALTKESTLPAHHMSRQTMNHNGLSSPNAYGSYNMRPETSASGLQPPQMYTGQLNGLENPARQSQIPQGFSSNNIPKPQGEGEIVPPTEYPYRAKAIFSYEANPDDANEISFSKHEVLEISDVSGRWWQARKENGETGIAPSNYLILL</sequence>
<dbReference type="EMBL" id="CM002236">
    <property type="protein sequence ID" value="EAA35962.2"/>
    <property type="molecule type" value="Genomic_DNA"/>
</dbReference>
<dbReference type="RefSeq" id="XP_965198.2">
    <property type="nucleotide sequence ID" value="XM_960105.2"/>
</dbReference>
<dbReference type="SMR" id="Q7SGL6"/>
<dbReference type="FunCoup" id="Q7SGL6">
    <property type="interactions" value="124"/>
</dbReference>
<dbReference type="STRING" id="367110.Q7SGL6"/>
<dbReference type="PaxDb" id="5141-EFNCRP00000008554"/>
<dbReference type="EnsemblFungi" id="EAA35962">
    <property type="protein sequence ID" value="EAA35962"/>
    <property type="gene ID" value="NCU08067"/>
</dbReference>
<dbReference type="GeneID" id="3881378"/>
<dbReference type="KEGG" id="ncr:NCU08067"/>
<dbReference type="VEuPathDB" id="FungiDB:NCU08067"/>
<dbReference type="HOGENOM" id="CLU_043316_1_0_1"/>
<dbReference type="InParanoid" id="Q7SGL6"/>
<dbReference type="OrthoDB" id="5983572at2759"/>
<dbReference type="Proteomes" id="UP000001805">
    <property type="component" value="Chromosome 1, Linkage Group I"/>
</dbReference>
<dbReference type="GO" id="GO:0005886">
    <property type="term" value="C:plasma membrane"/>
    <property type="evidence" value="ECO:0007669"/>
    <property type="project" value="UniProtKB-SubCell"/>
</dbReference>
<dbReference type="GO" id="GO:0030833">
    <property type="term" value="P:regulation of actin filament polymerization"/>
    <property type="evidence" value="ECO:0000318"/>
    <property type="project" value="GO_Central"/>
</dbReference>
<dbReference type="CDD" id="cd11855">
    <property type="entry name" value="SH3_Sho1p"/>
    <property type="match status" value="1"/>
</dbReference>
<dbReference type="FunFam" id="2.30.30.40:FF:000213">
    <property type="entry name" value="High osmolarity signaling protein SHO1"/>
    <property type="match status" value="1"/>
</dbReference>
<dbReference type="Gene3D" id="2.30.30.40">
    <property type="entry name" value="SH3 Domains"/>
    <property type="match status" value="1"/>
</dbReference>
<dbReference type="InterPro" id="IPR036028">
    <property type="entry name" value="SH3-like_dom_sf"/>
</dbReference>
<dbReference type="InterPro" id="IPR001452">
    <property type="entry name" value="SH3_domain"/>
</dbReference>
<dbReference type="InterPro" id="IPR035522">
    <property type="entry name" value="Sho1_SH3"/>
</dbReference>
<dbReference type="Pfam" id="PF00018">
    <property type="entry name" value="SH3_1"/>
    <property type="match status" value="1"/>
</dbReference>
<dbReference type="SMART" id="SM00326">
    <property type="entry name" value="SH3"/>
    <property type="match status" value="1"/>
</dbReference>
<dbReference type="SUPFAM" id="SSF50044">
    <property type="entry name" value="SH3-domain"/>
    <property type="match status" value="1"/>
</dbReference>
<dbReference type="PROSITE" id="PS50002">
    <property type="entry name" value="SH3"/>
    <property type="match status" value="1"/>
</dbReference>
<comment type="function">
    <text evidence="1">Plasma membrane osmosensor that activates the high osmolarity glycerol (HOG) MAPK signaling pathway in response to high osmolarity.</text>
</comment>
<comment type="subunit">
    <text evidence="1">Forms homooligomers.</text>
</comment>
<comment type="subcellular location">
    <subcellularLocation>
        <location evidence="1">Cell membrane</location>
        <topology evidence="1">Multi-pass membrane protein</topology>
    </subcellularLocation>
</comment>
<comment type="similarity">
    <text evidence="5">Belongs to the SHO1 family.</text>
</comment>
<gene>
    <name type="primary">sho1</name>
    <name type="ORF">NCU08067</name>
</gene>
<organism>
    <name type="scientific">Neurospora crassa (strain ATCC 24698 / 74-OR23-1A / CBS 708.71 / DSM 1257 / FGSC 987)</name>
    <dbReference type="NCBI Taxonomy" id="367110"/>
    <lineage>
        <taxon>Eukaryota</taxon>
        <taxon>Fungi</taxon>
        <taxon>Dikarya</taxon>
        <taxon>Ascomycota</taxon>
        <taxon>Pezizomycotina</taxon>
        <taxon>Sordariomycetes</taxon>
        <taxon>Sordariomycetidae</taxon>
        <taxon>Sordariales</taxon>
        <taxon>Sordariaceae</taxon>
        <taxon>Neurospora</taxon>
    </lineage>
</organism>
<evidence type="ECO:0000250" key="1"/>
<evidence type="ECO:0000255" key="2"/>
<evidence type="ECO:0000255" key="3">
    <source>
        <dbReference type="PROSITE-ProRule" id="PRU00192"/>
    </source>
</evidence>
<evidence type="ECO:0000256" key="4">
    <source>
        <dbReference type="SAM" id="MobiDB-lite"/>
    </source>
</evidence>
<evidence type="ECO:0000305" key="5"/>
<reference key="1">
    <citation type="journal article" date="2003" name="Nature">
        <title>The genome sequence of the filamentous fungus Neurospora crassa.</title>
        <authorList>
            <person name="Galagan J.E."/>
            <person name="Calvo S.E."/>
            <person name="Borkovich K.A."/>
            <person name="Selker E.U."/>
            <person name="Read N.D."/>
            <person name="Jaffe D.B."/>
            <person name="FitzHugh W."/>
            <person name="Ma L.-J."/>
            <person name="Smirnov S."/>
            <person name="Purcell S."/>
            <person name="Rehman B."/>
            <person name="Elkins T."/>
            <person name="Engels R."/>
            <person name="Wang S."/>
            <person name="Nielsen C.B."/>
            <person name="Butler J."/>
            <person name="Endrizzi M."/>
            <person name="Qui D."/>
            <person name="Ianakiev P."/>
            <person name="Bell-Pedersen D."/>
            <person name="Nelson M.A."/>
            <person name="Werner-Washburne M."/>
            <person name="Selitrennikoff C.P."/>
            <person name="Kinsey J.A."/>
            <person name="Braun E.L."/>
            <person name="Zelter A."/>
            <person name="Schulte U."/>
            <person name="Kothe G.O."/>
            <person name="Jedd G."/>
            <person name="Mewes H.-W."/>
            <person name="Staben C."/>
            <person name="Marcotte E."/>
            <person name="Greenberg D."/>
            <person name="Roy A."/>
            <person name="Foley K."/>
            <person name="Naylor J."/>
            <person name="Stange-Thomann N."/>
            <person name="Barrett R."/>
            <person name="Gnerre S."/>
            <person name="Kamal M."/>
            <person name="Kamvysselis M."/>
            <person name="Mauceli E.W."/>
            <person name="Bielke C."/>
            <person name="Rudd S."/>
            <person name="Frishman D."/>
            <person name="Krystofova S."/>
            <person name="Rasmussen C."/>
            <person name="Metzenberg R.L."/>
            <person name="Perkins D.D."/>
            <person name="Kroken S."/>
            <person name="Cogoni C."/>
            <person name="Macino G."/>
            <person name="Catcheside D.E.A."/>
            <person name="Li W."/>
            <person name="Pratt R.J."/>
            <person name="Osmani S.A."/>
            <person name="DeSouza C.P.C."/>
            <person name="Glass N.L."/>
            <person name="Orbach M.J."/>
            <person name="Berglund J.A."/>
            <person name="Voelker R."/>
            <person name="Yarden O."/>
            <person name="Plamann M."/>
            <person name="Seiler S."/>
            <person name="Dunlap J.C."/>
            <person name="Radford A."/>
            <person name="Aramayo R."/>
            <person name="Natvig D.O."/>
            <person name="Alex L.A."/>
            <person name="Mannhaupt G."/>
            <person name="Ebbole D.J."/>
            <person name="Freitag M."/>
            <person name="Paulsen I."/>
            <person name="Sachs M.S."/>
            <person name="Lander E.S."/>
            <person name="Nusbaum C."/>
            <person name="Birren B.W."/>
        </authorList>
    </citation>
    <scope>NUCLEOTIDE SEQUENCE [LARGE SCALE GENOMIC DNA]</scope>
    <source>
        <strain>ATCC 24698 / 74-OR23-1A / CBS 708.71 / DSM 1257 / FGSC 987</strain>
    </source>
</reference>
<name>SHO1_NEUCR</name>
<accession>Q7SGL6</accession>
<feature type="chain" id="PRO_0000410386" description="High osmolarity signaling protein sho1">
    <location>
        <begin position="1"/>
        <end position="322"/>
    </location>
</feature>
<feature type="topological domain" description="Cytoplasmic" evidence="2">
    <location>
        <begin position="1"/>
        <end position="40"/>
    </location>
</feature>
<feature type="transmembrane region" description="Helical" evidence="2">
    <location>
        <begin position="41"/>
        <end position="61"/>
    </location>
</feature>
<feature type="topological domain" description="Extracellular" evidence="2">
    <location>
        <begin position="62"/>
        <end position="81"/>
    </location>
</feature>
<feature type="transmembrane region" description="Helical" evidence="2">
    <location>
        <begin position="82"/>
        <end position="102"/>
    </location>
</feature>
<feature type="topological domain" description="Cytoplasmic" evidence="2">
    <location>
        <begin position="103"/>
        <end position="107"/>
    </location>
</feature>
<feature type="transmembrane region" description="Helical" evidence="2">
    <location>
        <begin position="108"/>
        <end position="128"/>
    </location>
</feature>
<feature type="topological domain" description="Extracellular" evidence="2">
    <location>
        <begin position="129"/>
        <end position="140"/>
    </location>
</feature>
<feature type="transmembrane region" description="Helical" evidence="2">
    <location>
        <begin position="141"/>
        <end position="161"/>
    </location>
</feature>
<feature type="topological domain" description="Cytoplasmic" evidence="2">
    <location>
        <begin position="162"/>
        <end position="322"/>
    </location>
</feature>
<feature type="domain" description="SH3" evidence="3">
    <location>
        <begin position="263"/>
        <end position="322"/>
    </location>
</feature>
<feature type="region of interest" description="Disordered" evidence="4">
    <location>
        <begin position="1"/>
        <end position="20"/>
    </location>
</feature>
<feature type="region of interest" description="Disordered" evidence="4">
    <location>
        <begin position="191"/>
        <end position="261"/>
    </location>
</feature>
<feature type="compositionally biased region" description="Polar residues" evidence="4">
    <location>
        <begin position="1"/>
        <end position="16"/>
    </location>
</feature>
<feature type="compositionally biased region" description="Polar residues" evidence="4">
    <location>
        <begin position="191"/>
        <end position="250"/>
    </location>
</feature>